<reference key="1">
    <citation type="journal article" date="2000" name="Nature">
        <title>Sequence and analysis of chromosome 1 of the plant Arabidopsis thaliana.</title>
        <authorList>
            <person name="Theologis A."/>
            <person name="Ecker J.R."/>
            <person name="Palm C.J."/>
            <person name="Federspiel N.A."/>
            <person name="Kaul S."/>
            <person name="White O."/>
            <person name="Alonso J."/>
            <person name="Altafi H."/>
            <person name="Araujo R."/>
            <person name="Bowman C.L."/>
            <person name="Brooks S.Y."/>
            <person name="Buehler E."/>
            <person name="Chan A."/>
            <person name="Chao Q."/>
            <person name="Chen H."/>
            <person name="Cheuk R.F."/>
            <person name="Chin C.W."/>
            <person name="Chung M.K."/>
            <person name="Conn L."/>
            <person name="Conway A.B."/>
            <person name="Conway A.R."/>
            <person name="Creasy T.H."/>
            <person name="Dewar K."/>
            <person name="Dunn P."/>
            <person name="Etgu P."/>
            <person name="Feldblyum T.V."/>
            <person name="Feng J.-D."/>
            <person name="Fong B."/>
            <person name="Fujii C.Y."/>
            <person name="Gill J.E."/>
            <person name="Goldsmith A.D."/>
            <person name="Haas B."/>
            <person name="Hansen N.F."/>
            <person name="Hughes B."/>
            <person name="Huizar L."/>
            <person name="Hunter J.L."/>
            <person name="Jenkins J."/>
            <person name="Johnson-Hopson C."/>
            <person name="Khan S."/>
            <person name="Khaykin E."/>
            <person name="Kim C.J."/>
            <person name="Koo H.L."/>
            <person name="Kremenetskaia I."/>
            <person name="Kurtz D.B."/>
            <person name="Kwan A."/>
            <person name="Lam B."/>
            <person name="Langin-Hooper S."/>
            <person name="Lee A."/>
            <person name="Lee J.M."/>
            <person name="Lenz C.A."/>
            <person name="Li J.H."/>
            <person name="Li Y.-P."/>
            <person name="Lin X."/>
            <person name="Liu S.X."/>
            <person name="Liu Z.A."/>
            <person name="Luros J.S."/>
            <person name="Maiti R."/>
            <person name="Marziali A."/>
            <person name="Militscher J."/>
            <person name="Miranda M."/>
            <person name="Nguyen M."/>
            <person name="Nierman W.C."/>
            <person name="Osborne B.I."/>
            <person name="Pai G."/>
            <person name="Peterson J."/>
            <person name="Pham P.K."/>
            <person name="Rizzo M."/>
            <person name="Rooney T."/>
            <person name="Rowley D."/>
            <person name="Sakano H."/>
            <person name="Salzberg S.L."/>
            <person name="Schwartz J.R."/>
            <person name="Shinn P."/>
            <person name="Southwick A.M."/>
            <person name="Sun H."/>
            <person name="Tallon L.J."/>
            <person name="Tambunga G."/>
            <person name="Toriumi M.J."/>
            <person name="Town C.D."/>
            <person name="Utterback T."/>
            <person name="Van Aken S."/>
            <person name="Vaysberg M."/>
            <person name="Vysotskaia V.S."/>
            <person name="Walker M."/>
            <person name="Wu D."/>
            <person name="Yu G."/>
            <person name="Fraser C.M."/>
            <person name="Venter J.C."/>
            <person name="Davis R.W."/>
        </authorList>
    </citation>
    <scope>NUCLEOTIDE SEQUENCE [LARGE SCALE GENOMIC DNA]</scope>
    <source>
        <strain>cv. Columbia</strain>
    </source>
</reference>
<reference key="2">
    <citation type="journal article" date="2017" name="Plant J.">
        <title>Araport11: a complete reannotation of the Arabidopsis thaliana reference genome.</title>
        <authorList>
            <person name="Cheng C.Y."/>
            <person name="Krishnakumar V."/>
            <person name="Chan A.P."/>
            <person name="Thibaud-Nissen F."/>
            <person name="Schobel S."/>
            <person name="Town C.D."/>
        </authorList>
    </citation>
    <scope>GENOME REANNOTATION</scope>
    <source>
        <strain>cv. Columbia</strain>
    </source>
</reference>
<reference key="3">
    <citation type="journal article" date="2003" name="Science">
        <title>Empirical analysis of transcriptional activity in the Arabidopsis genome.</title>
        <authorList>
            <person name="Yamada K."/>
            <person name="Lim J."/>
            <person name="Dale J.M."/>
            <person name="Chen H."/>
            <person name="Shinn P."/>
            <person name="Palm C.J."/>
            <person name="Southwick A.M."/>
            <person name="Wu H.C."/>
            <person name="Kim C.J."/>
            <person name="Nguyen M."/>
            <person name="Pham P.K."/>
            <person name="Cheuk R.F."/>
            <person name="Karlin-Newmann G."/>
            <person name="Liu S.X."/>
            <person name="Lam B."/>
            <person name="Sakano H."/>
            <person name="Wu T."/>
            <person name="Yu G."/>
            <person name="Miranda M."/>
            <person name="Quach H.L."/>
            <person name="Tripp M."/>
            <person name="Chang C.H."/>
            <person name="Lee J.M."/>
            <person name="Toriumi M.J."/>
            <person name="Chan M.M."/>
            <person name="Tang C.C."/>
            <person name="Onodera C.S."/>
            <person name="Deng J.M."/>
            <person name="Akiyama K."/>
            <person name="Ansari Y."/>
            <person name="Arakawa T."/>
            <person name="Banh J."/>
            <person name="Banno F."/>
            <person name="Bowser L."/>
            <person name="Brooks S.Y."/>
            <person name="Carninci P."/>
            <person name="Chao Q."/>
            <person name="Choy N."/>
            <person name="Enju A."/>
            <person name="Goldsmith A.D."/>
            <person name="Gurjal M."/>
            <person name="Hansen N.F."/>
            <person name="Hayashizaki Y."/>
            <person name="Johnson-Hopson C."/>
            <person name="Hsuan V.W."/>
            <person name="Iida K."/>
            <person name="Karnes M."/>
            <person name="Khan S."/>
            <person name="Koesema E."/>
            <person name="Ishida J."/>
            <person name="Jiang P.X."/>
            <person name="Jones T."/>
            <person name="Kawai J."/>
            <person name="Kamiya A."/>
            <person name="Meyers C."/>
            <person name="Nakajima M."/>
            <person name="Narusaka M."/>
            <person name="Seki M."/>
            <person name="Sakurai T."/>
            <person name="Satou M."/>
            <person name="Tamse R."/>
            <person name="Vaysberg M."/>
            <person name="Wallender E.K."/>
            <person name="Wong C."/>
            <person name="Yamamura Y."/>
            <person name="Yuan S."/>
            <person name="Shinozaki K."/>
            <person name="Davis R.W."/>
            <person name="Theologis A."/>
            <person name="Ecker J.R."/>
        </authorList>
    </citation>
    <scope>NUCLEOTIDE SEQUENCE [LARGE SCALE MRNA]</scope>
    <source>
        <strain>cv. Columbia</strain>
    </source>
</reference>
<reference key="4">
    <citation type="submission" date="2004-09" db="EMBL/GenBank/DDBJ databases">
        <title>Large-scale analysis of RIKEN Arabidopsis full-length (RAFL) cDNAs.</title>
        <authorList>
            <person name="Totoki Y."/>
            <person name="Seki M."/>
            <person name="Ishida J."/>
            <person name="Nakajima M."/>
            <person name="Enju A."/>
            <person name="Kamiya A."/>
            <person name="Narusaka M."/>
            <person name="Shin-i T."/>
            <person name="Nakagawa M."/>
            <person name="Sakamoto N."/>
            <person name="Oishi K."/>
            <person name="Kohara Y."/>
            <person name="Kobayashi M."/>
            <person name="Toyoda A."/>
            <person name="Sakaki Y."/>
            <person name="Sakurai T."/>
            <person name="Iida K."/>
            <person name="Akiyama K."/>
            <person name="Satou M."/>
            <person name="Toyoda T."/>
            <person name="Konagaya A."/>
            <person name="Carninci P."/>
            <person name="Kawai J."/>
            <person name="Hayashizaki Y."/>
            <person name="Shinozaki K."/>
        </authorList>
    </citation>
    <scope>NUCLEOTIDE SEQUENCE [LARGE SCALE MRNA]</scope>
    <source>
        <strain>cv. Columbia</strain>
    </source>
</reference>
<reference key="5">
    <citation type="journal article" date="2010" name="BMC Plant Biol.">
        <title>Genomic evolution and complexity of the Anaphase-promoting Complex (APC) in land plants.</title>
        <authorList>
            <person name="Lima M.D.F."/>
            <person name="Eloy N.B."/>
            <person name="Pegoraro C."/>
            <person name="Sagit R."/>
            <person name="Rojas C."/>
            <person name="Bretz T."/>
            <person name="Vargas L."/>
            <person name="Elofsson A."/>
            <person name="de Oliveira A.C."/>
            <person name="Hemerly A.S."/>
            <person name="Ferreira P.C.G."/>
        </authorList>
    </citation>
    <scope>REVIEW</scope>
    <scope>GENE FAMILY</scope>
</reference>
<reference key="6">
    <citation type="journal article" date="2011" name="Plant Cell">
        <title>Arabidopsis ULTRAVIOLET-B-INSENSITIVE4 maintains cell division activity by temporal inhibition of the anaphase-promoting complex/cyclosome.</title>
        <authorList>
            <person name="Heyman J."/>
            <person name="Van den Daele H."/>
            <person name="De Wit K."/>
            <person name="Boudolf V."/>
            <person name="Berckmans B."/>
            <person name="Verkest A."/>
            <person name="Alvim Kamei C.L."/>
            <person name="De Jaeger G."/>
            <person name="Koncz C."/>
            <person name="De Veylder L."/>
        </authorList>
    </citation>
    <scope>INTERACTION WITH PYM</scope>
</reference>
<gene>
    <name type="primary">APC5</name>
    <name type="ordered locus">At1g06590</name>
    <name type="ORF">F12K11.7</name>
</gene>
<feature type="chain" id="PRO_0000396842" description="Anaphase-promoting complex subunit 5">
    <location>
        <begin position="1"/>
        <end position="916"/>
    </location>
</feature>
<feature type="region of interest" description="Disordered" evidence="2">
    <location>
        <begin position="234"/>
        <end position="255"/>
    </location>
</feature>
<feature type="compositionally biased region" description="Basic and acidic residues" evidence="2">
    <location>
        <begin position="234"/>
        <end position="247"/>
    </location>
</feature>
<feature type="sequence conflict" description="In Ref. 4; BAD44129." evidence="4" ref="4">
    <original>E</original>
    <variation>G</variation>
    <location>
        <position position="861"/>
    </location>
</feature>
<dbReference type="EMBL" id="AC007592">
    <property type="protein sequence ID" value="AAF24811.1"/>
    <property type="status" value="ALT_SEQ"/>
    <property type="molecule type" value="Genomic_DNA"/>
</dbReference>
<dbReference type="EMBL" id="CP002684">
    <property type="protein sequence ID" value="AEE28009.1"/>
    <property type="molecule type" value="Genomic_DNA"/>
</dbReference>
<dbReference type="EMBL" id="AY138229">
    <property type="protein sequence ID" value="AAN10197.1"/>
    <property type="molecule type" value="mRNA"/>
</dbReference>
<dbReference type="EMBL" id="AK176366">
    <property type="protein sequence ID" value="BAD44129.1"/>
    <property type="molecule type" value="mRNA"/>
</dbReference>
<dbReference type="PIR" id="C86201">
    <property type="entry name" value="C86201"/>
</dbReference>
<dbReference type="RefSeq" id="NP_172146.2">
    <property type="nucleotide sequence ID" value="NM_100538.5"/>
</dbReference>
<dbReference type="SMR" id="Q8H1U4"/>
<dbReference type="BioGRID" id="22411">
    <property type="interactions" value="10"/>
</dbReference>
<dbReference type="FunCoup" id="Q8H1U4">
    <property type="interactions" value="2755"/>
</dbReference>
<dbReference type="IntAct" id="Q8H1U4">
    <property type="interactions" value="10"/>
</dbReference>
<dbReference type="STRING" id="3702.Q8H1U4"/>
<dbReference type="iPTMnet" id="Q8H1U4"/>
<dbReference type="PaxDb" id="3702-AT1G06590.1"/>
<dbReference type="ProteomicsDB" id="244476"/>
<dbReference type="DNASU" id="837170"/>
<dbReference type="EnsemblPlants" id="AT1G06590.1">
    <property type="protein sequence ID" value="AT1G06590.1"/>
    <property type="gene ID" value="AT1G06590"/>
</dbReference>
<dbReference type="GeneID" id="837170"/>
<dbReference type="Gramene" id="AT1G06590.1">
    <property type="protein sequence ID" value="AT1G06590.1"/>
    <property type="gene ID" value="AT1G06590"/>
</dbReference>
<dbReference type="KEGG" id="ath:AT1G06590"/>
<dbReference type="Araport" id="AT1G06590"/>
<dbReference type="TAIR" id="AT1G06590"/>
<dbReference type="eggNOG" id="KOG4322">
    <property type="taxonomic scope" value="Eukaryota"/>
</dbReference>
<dbReference type="HOGENOM" id="CLU_006214_0_0_1"/>
<dbReference type="InParanoid" id="Q8H1U4"/>
<dbReference type="OMA" id="YAPRSHM"/>
<dbReference type="PhylomeDB" id="Q8H1U4"/>
<dbReference type="UniPathway" id="UPA00143"/>
<dbReference type="PRO" id="PR:Q8H1U4"/>
<dbReference type="Proteomes" id="UP000006548">
    <property type="component" value="Chromosome 1"/>
</dbReference>
<dbReference type="ExpressionAtlas" id="Q8H1U4">
    <property type="expression patterns" value="baseline and differential"/>
</dbReference>
<dbReference type="GO" id="GO:0005680">
    <property type="term" value="C:anaphase-promoting complex"/>
    <property type="evidence" value="ECO:0007669"/>
    <property type="project" value="InterPro"/>
</dbReference>
<dbReference type="GO" id="GO:0051301">
    <property type="term" value="P:cell division"/>
    <property type="evidence" value="ECO:0007669"/>
    <property type="project" value="UniProtKB-KW"/>
</dbReference>
<dbReference type="GO" id="GO:0016567">
    <property type="term" value="P:protein ubiquitination"/>
    <property type="evidence" value="ECO:0007669"/>
    <property type="project" value="UniProtKB-UniPathway"/>
</dbReference>
<dbReference type="CDD" id="cd16270">
    <property type="entry name" value="Apc5_N"/>
    <property type="match status" value="1"/>
</dbReference>
<dbReference type="InterPro" id="IPR037679">
    <property type="entry name" value="Apc5"/>
</dbReference>
<dbReference type="InterPro" id="IPR026000">
    <property type="entry name" value="Apc5_dom"/>
</dbReference>
<dbReference type="PANTHER" id="PTHR12830">
    <property type="entry name" value="ANAPHASE-PROMOTING COMPLEX SUBUNIT 5"/>
    <property type="match status" value="1"/>
</dbReference>
<dbReference type="PANTHER" id="PTHR12830:SF9">
    <property type="entry name" value="ANAPHASE-PROMOTING COMPLEX SUBUNIT 5"/>
    <property type="match status" value="1"/>
</dbReference>
<dbReference type="Pfam" id="PF12862">
    <property type="entry name" value="ANAPC5"/>
    <property type="match status" value="1"/>
</dbReference>
<organism>
    <name type="scientific">Arabidopsis thaliana</name>
    <name type="common">Mouse-ear cress</name>
    <dbReference type="NCBI Taxonomy" id="3702"/>
    <lineage>
        <taxon>Eukaryota</taxon>
        <taxon>Viridiplantae</taxon>
        <taxon>Streptophyta</taxon>
        <taxon>Embryophyta</taxon>
        <taxon>Tracheophyta</taxon>
        <taxon>Spermatophyta</taxon>
        <taxon>Magnoliopsida</taxon>
        <taxon>eudicotyledons</taxon>
        <taxon>Gunneridae</taxon>
        <taxon>Pentapetalae</taxon>
        <taxon>rosids</taxon>
        <taxon>malvids</taxon>
        <taxon>Brassicales</taxon>
        <taxon>Brassicaceae</taxon>
        <taxon>Camelineae</taxon>
        <taxon>Arabidopsis</taxon>
    </lineage>
</organism>
<sequence length="916" mass="101040">MAGLTRTAGAFAVTPHKISVCILLQIYAPSAQMSLPFPFSSVAQHNRLGLYLLSLTKSCDDIFEPKLEKLINQLREVGEEMDAWLTDHLTNRFSSLASPDDLLNFFNDMRGILGSLDSGVVQDDQIILDPNSNLGMFVRRCILAFNLLSFEGVCHLFSSIEDYCKEAHSSFAQFGAPNNNLESLIQYDQMDMENYAMDKPTEEIEFQKTASGIVPFHLHTPDSLMKATEGLLHNRKETSRTSKKDTEATPVARASTSTLEESLVDESLFLRTNLQIQGFLMEQADAIEIHGSSSSFSSSSIESFLDQLQKLAPELHRVHFLRYLNKLHSDDYFAALDNLLRYFDYSAGTEGFDLVPPSTGCSMYGRYEIGLLCLGMMHFRFGHPNLALEVLTEAVRVSQQLSNDTCLAYTLAAMSNLLSEMGIASTSGVLGSSYSPVTSTASSLSVQQRVYILLKESLRRADSLKLRRLVASNHLAMAKFELMHVQRPLLSFGPKASMRHKTCPVSVCKEIRLGAHLISDFSSESSTMTIDGSLSSAWLKDLQKPWGPPVISPDSGSRKSSTFFQLCDHLVSIPGSVSQLIGASYLLRATSWELYGSAPMARMNTLVYATLFGDSSSSSDAELAYLKLIQHLALYKGYKDAFAALKVAEEKFLTVSKSKVLLLKLQLLHERALHCGNLKLAQRICNELGGLASTAMGVDMELKVEASLREARTLLAAKQYSQAANVAHSLFCTCHKFNLQIEKASVLLLLAEIHKKSGNAVLGLPYALASISFCQSFNLDLLKASATLTLAELWLGLGSNHTKRALDLLHGAFPMILGHGGLELRARAYIFEANCYLSDPSSSVSTDSDTVLDSLRQASDELQALEYHELAAEASYLMAMVYDKLGRLDEREEAASLFKKHIIALENPQDVEQNMA</sequence>
<comment type="function">
    <text evidence="1">Component of the anaphase promoting complex/cyclosome (APC/C), a cell cycle-regulated E3 ubiquitin-protein ligase complex that controls progression through mitosis and the G1 phase of the cell cycle. The APC/C complex controls several key steps in the cell cycle by mediating ubiquitination and subsequent degradation of target proteins such as cyclins. The APC/C complex is required for the female gametophyte development and is involved in several aspect of development by controlling cell division and cell elongation. Involved in the control of endoreduplication (By similarity).</text>
</comment>
<comment type="pathway">
    <text>Protein modification; protein ubiquitination.</text>
</comment>
<comment type="subunit">
    <text evidence="1 3">The APC/C is composed of at least 10 subunits (By similarity). Interacts with PYM.</text>
</comment>
<comment type="subcellular location">
    <subcellularLocation>
        <location evidence="1">Nucleus</location>
    </subcellularLocation>
</comment>
<comment type="similarity">
    <text evidence="4">Belongs to the APC5 family.</text>
</comment>
<comment type="sequence caution" evidence="4">
    <conflict type="erroneous gene model prediction">
        <sequence resource="EMBL-CDS" id="AAF24811"/>
    </conflict>
</comment>
<comment type="online information" name="Arabidopsis APC/C subunits">
    <link uri="http://personal.rhul.ac.uk/ujba/110/apc/APC.htm"/>
</comment>
<accession>Q8H1U4</accession>
<accession>Q67YV2</accession>
<accession>Q9SHK3</accession>
<evidence type="ECO:0000250" key="1"/>
<evidence type="ECO:0000256" key="2">
    <source>
        <dbReference type="SAM" id="MobiDB-lite"/>
    </source>
</evidence>
<evidence type="ECO:0000269" key="3">
    <source>
    </source>
</evidence>
<evidence type="ECO:0000305" key="4"/>
<protein>
    <recommendedName>
        <fullName>Anaphase-promoting complex subunit 5</fullName>
    </recommendedName>
    <alternativeName>
        <fullName>Cyclosome subunit 5</fullName>
    </alternativeName>
</protein>
<proteinExistence type="evidence at protein level"/>
<keyword id="KW-0131">Cell cycle</keyword>
<keyword id="KW-0132">Cell division</keyword>
<keyword id="KW-0498">Mitosis</keyword>
<keyword id="KW-0539">Nucleus</keyword>
<keyword id="KW-1185">Reference proteome</keyword>
<keyword id="KW-0833">Ubl conjugation pathway</keyword>
<name>APC5_ARATH</name>